<name>CLE17_ARATH</name>
<organism>
    <name type="scientific">Arabidopsis thaliana</name>
    <name type="common">Mouse-ear cress</name>
    <dbReference type="NCBI Taxonomy" id="3702"/>
    <lineage>
        <taxon>Eukaryota</taxon>
        <taxon>Viridiplantae</taxon>
        <taxon>Streptophyta</taxon>
        <taxon>Embryophyta</taxon>
        <taxon>Tracheophyta</taxon>
        <taxon>Spermatophyta</taxon>
        <taxon>Magnoliopsida</taxon>
        <taxon>eudicotyledons</taxon>
        <taxon>Gunneridae</taxon>
        <taxon>Pentapetalae</taxon>
        <taxon>rosids</taxon>
        <taxon>malvids</taxon>
        <taxon>Brassicales</taxon>
        <taxon>Brassicaceae</taxon>
        <taxon>Camelineae</taxon>
        <taxon>Arabidopsis</taxon>
    </lineage>
</organism>
<keyword id="KW-0217">Developmental protein</keyword>
<keyword id="KW-0221">Differentiation</keyword>
<keyword id="KW-0325">Glycoprotein</keyword>
<keyword id="KW-0379">Hydroxylation</keyword>
<keyword id="KW-1185">Reference proteome</keyword>
<keyword id="KW-0964">Secreted</keyword>
<keyword id="KW-0732">Signal</keyword>
<comment type="function">
    <molecule>CLE17p</molecule>
    <text evidence="5 6">Extracellular signal peptide that regulates cell fate. Represses root apical meristem maintenance. Regulates the transition of protophloem cells from proliferation to differentiation, thus impinging on postembryonic growth capacity of the root meristem; this signaling pathway requires CRN and CLV2 (PubMed:28607033).</text>
</comment>
<comment type="subcellular location">
    <molecule>CLE17p</molecule>
    <subcellularLocation>
        <location evidence="1">Secreted</location>
        <location evidence="1">Extracellular space</location>
    </subcellularLocation>
</comment>
<comment type="tissue specificity">
    <molecule>CLE17p</molecule>
    <text evidence="4">Mostly expressed in seedlings, roots, flowers, stems and apex, and, to a lower extent, in leaves and siliques.</text>
</comment>
<comment type="PTM">
    <molecule>CLE17p</molecule>
    <text evidence="1">The O-glycosylation (arabinosylation) of the hydroxyproline Pro-94 enhances binding affinity of the CLE17p peptide for its receptor.</text>
</comment>
<comment type="similarity">
    <text evidence="8">Belongs to the CLV3/ESR signal peptide family.</text>
</comment>
<feature type="signal peptide" evidence="2">
    <location>
        <begin position="1"/>
        <end position="21"/>
    </location>
</feature>
<feature type="chain" id="PRO_0000401263" description="CLAVATA3/ESR (CLE)-related protein 17">
    <location>
        <begin position="22"/>
        <end position="99"/>
    </location>
</feature>
<feature type="peptide" id="PRO_0000401264" description="CLE17p" evidence="1">
    <location>
        <begin position="88"/>
        <end position="99"/>
    </location>
</feature>
<feature type="region of interest" description="Disordered" evidence="3">
    <location>
        <begin position="77"/>
        <end position="99"/>
    </location>
</feature>
<feature type="compositionally biased region" description="Basic and acidic residues" evidence="3">
    <location>
        <begin position="77"/>
        <end position="89"/>
    </location>
</feature>
<feature type="modified residue" description="Hydroxyproline" evidence="1">
    <location>
        <position position="94"/>
    </location>
</feature>
<feature type="glycosylation site" description="O-linked (Ara...) hydroxyproline" evidence="1">
    <location>
        <position position="94"/>
    </location>
</feature>
<protein>
    <recommendedName>
        <fullName evidence="7">CLAVATA3/ESR (CLE)-related protein 17</fullName>
    </recommendedName>
    <component>
        <recommendedName>
            <fullName evidence="7">CLE17p</fullName>
        </recommendedName>
    </component>
</protein>
<gene>
    <name evidence="7" type="primary">CLE17</name>
    <name evidence="9" type="ordered locus">At1g70895</name>
    <name evidence="10" type="ORF">F15H11</name>
</gene>
<proteinExistence type="evidence at transcript level"/>
<accession>Q8L9H6</accession>
<reference key="1">
    <citation type="journal article" date="2000" name="Nature">
        <title>Sequence and analysis of chromosome 1 of the plant Arabidopsis thaliana.</title>
        <authorList>
            <person name="Theologis A."/>
            <person name="Ecker J.R."/>
            <person name="Palm C.J."/>
            <person name="Federspiel N.A."/>
            <person name="Kaul S."/>
            <person name="White O."/>
            <person name="Alonso J."/>
            <person name="Altafi H."/>
            <person name="Araujo R."/>
            <person name="Bowman C.L."/>
            <person name="Brooks S.Y."/>
            <person name="Buehler E."/>
            <person name="Chan A."/>
            <person name="Chao Q."/>
            <person name="Chen H."/>
            <person name="Cheuk R.F."/>
            <person name="Chin C.W."/>
            <person name="Chung M.K."/>
            <person name="Conn L."/>
            <person name="Conway A.B."/>
            <person name="Conway A.R."/>
            <person name="Creasy T.H."/>
            <person name="Dewar K."/>
            <person name="Dunn P."/>
            <person name="Etgu P."/>
            <person name="Feldblyum T.V."/>
            <person name="Feng J.-D."/>
            <person name="Fong B."/>
            <person name="Fujii C.Y."/>
            <person name="Gill J.E."/>
            <person name="Goldsmith A.D."/>
            <person name="Haas B."/>
            <person name="Hansen N.F."/>
            <person name="Hughes B."/>
            <person name="Huizar L."/>
            <person name="Hunter J.L."/>
            <person name="Jenkins J."/>
            <person name="Johnson-Hopson C."/>
            <person name="Khan S."/>
            <person name="Khaykin E."/>
            <person name="Kim C.J."/>
            <person name="Koo H.L."/>
            <person name="Kremenetskaia I."/>
            <person name="Kurtz D.B."/>
            <person name="Kwan A."/>
            <person name="Lam B."/>
            <person name="Langin-Hooper S."/>
            <person name="Lee A."/>
            <person name="Lee J.M."/>
            <person name="Lenz C.A."/>
            <person name="Li J.H."/>
            <person name="Li Y.-P."/>
            <person name="Lin X."/>
            <person name="Liu S.X."/>
            <person name="Liu Z.A."/>
            <person name="Luros J.S."/>
            <person name="Maiti R."/>
            <person name="Marziali A."/>
            <person name="Militscher J."/>
            <person name="Miranda M."/>
            <person name="Nguyen M."/>
            <person name="Nierman W.C."/>
            <person name="Osborne B.I."/>
            <person name="Pai G."/>
            <person name="Peterson J."/>
            <person name="Pham P.K."/>
            <person name="Rizzo M."/>
            <person name="Rooney T."/>
            <person name="Rowley D."/>
            <person name="Sakano H."/>
            <person name="Salzberg S.L."/>
            <person name="Schwartz J.R."/>
            <person name="Shinn P."/>
            <person name="Southwick A.M."/>
            <person name="Sun H."/>
            <person name="Tallon L.J."/>
            <person name="Tambunga G."/>
            <person name="Toriumi M.J."/>
            <person name="Town C.D."/>
            <person name="Utterback T."/>
            <person name="Van Aken S."/>
            <person name="Vaysberg M."/>
            <person name="Vysotskaia V.S."/>
            <person name="Walker M."/>
            <person name="Wu D."/>
            <person name="Yu G."/>
            <person name="Fraser C.M."/>
            <person name="Venter J.C."/>
            <person name="Davis R.W."/>
        </authorList>
    </citation>
    <scope>NUCLEOTIDE SEQUENCE [LARGE SCALE GENOMIC DNA]</scope>
    <source>
        <strain>cv. Columbia</strain>
    </source>
</reference>
<reference key="2">
    <citation type="journal article" date="2017" name="Plant J.">
        <title>Araport11: a complete reannotation of the Arabidopsis thaliana reference genome.</title>
        <authorList>
            <person name="Cheng C.Y."/>
            <person name="Krishnakumar V."/>
            <person name="Chan A.P."/>
            <person name="Thibaud-Nissen F."/>
            <person name="Schobel S."/>
            <person name="Town C.D."/>
        </authorList>
    </citation>
    <scope>GENOME REANNOTATION</scope>
    <source>
        <strain>cv. Columbia</strain>
    </source>
</reference>
<reference key="3">
    <citation type="submission" date="2006-02" db="EMBL/GenBank/DDBJ databases">
        <title>Arabidopsis ORF clones.</title>
        <authorList>
            <person name="Shinn P."/>
            <person name="Chen H."/>
            <person name="Kim C.J."/>
            <person name="Ecker J.R."/>
        </authorList>
    </citation>
    <scope>NUCLEOTIDE SEQUENCE [LARGE SCALE MRNA]</scope>
    <source>
        <strain>cv. Columbia</strain>
    </source>
</reference>
<reference key="4">
    <citation type="submission" date="2002-03" db="EMBL/GenBank/DDBJ databases">
        <title>Full-length cDNA from Arabidopsis thaliana.</title>
        <authorList>
            <person name="Brover V.V."/>
            <person name="Troukhan M.E."/>
            <person name="Alexandrov N.A."/>
            <person name="Lu Y.-P."/>
            <person name="Flavell R.B."/>
            <person name="Feldmann K.A."/>
        </authorList>
    </citation>
    <scope>NUCLEOTIDE SEQUENCE [LARGE SCALE MRNA]</scope>
</reference>
<reference key="5">
    <citation type="journal article" date="2001" name="Plant Physiol.">
        <title>A large family of genes that share homology with CLAVATA3.</title>
        <authorList>
            <person name="Cock J.M."/>
            <person name="McCormick S."/>
        </authorList>
    </citation>
    <scope>GENE FAMILY</scope>
    <scope>NOMENCLATURE</scope>
</reference>
<reference key="6">
    <citation type="journal article" date="2003" name="Plant Mol. Biol.">
        <title>The Arabidopsis CLV3-like (CLE) genes are expressed in diverse tissues and encode secreted proteins.</title>
        <authorList>
            <person name="Sharma V.K."/>
            <person name="Ramirez J."/>
            <person name="Fletcher J.C."/>
        </authorList>
    </citation>
    <scope>TISSUE SPECIFICITY</scope>
</reference>
<reference key="7">
    <citation type="journal article" date="2006" name="Plant Physiol.">
        <title>Gain-of-function phenotypes of many CLAVATA3/ESR genes, including four new family members, correlate with tandem variations in the conserved CLAVATA3/ESR domain.</title>
        <authorList>
            <person name="Strabala T.J."/>
            <person name="O'donnell P.J."/>
            <person name="Smit A.-M."/>
            <person name="Ampomah-Dwamena C."/>
            <person name="Martin E.J."/>
            <person name="Netzler N."/>
            <person name="Nieuwenhuizen N.J."/>
            <person name="Quinn B.D."/>
            <person name="Foote H.C.C."/>
            <person name="Hudson K.R."/>
        </authorList>
    </citation>
    <scope>GENE FAMILY</scope>
</reference>
<reference key="8">
    <citation type="journal article" date="2006" name="Science">
        <title>Dodeca-CLE peptides as suppressors of plant stem cell differentiation.</title>
        <authorList>
            <person name="Ito Y."/>
            <person name="Nakanomyo I."/>
            <person name="Motose H."/>
            <person name="Iwamoto K."/>
            <person name="Sawa S."/>
            <person name="Dohmae N."/>
            <person name="Fukuda H."/>
        </authorList>
    </citation>
    <scope>FUNCTION</scope>
</reference>
<reference key="9">
    <citation type="journal article" date="2008" name="Cell. Mol. Life Sci.">
        <title>The CLE family of plant polypeptide signaling molecules.</title>
        <authorList>
            <person name="Jun J.H."/>
            <person name="Fiume E."/>
            <person name="Fletcher J.C."/>
        </authorList>
    </citation>
    <scope>REVIEW</scope>
</reference>
<reference key="10">
    <citation type="journal article" date="2008" name="Curr. Opin. Plant Biol.">
        <title>Diverse and conserved roles of CLE peptides.</title>
        <authorList>
            <person name="Mitchum M.G."/>
            <person name="Wang X."/>
            <person name="Davis E.L."/>
        </authorList>
    </citation>
    <scope>REVIEW</scope>
</reference>
<reference key="11">
    <citation type="journal article" date="2010" name="Protoplasma">
        <title>CLE peptide signaling during plant development.</title>
        <authorList>
            <person name="Wang G."/>
            <person name="Fiers M."/>
        </authorList>
    </citation>
    <scope>REVIEW</scope>
</reference>
<reference key="12">
    <citation type="journal article" date="2017" name="EMBO Rep.">
        <title>Perception of root-active CLE peptides requires CORYNE function in the phloem vasculature.</title>
        <authorList>
            <person name="Hazak O."/>
            <person name="Brandt B."/>
            <person name="Cattaneo P."/>
            <person name="Santiago J."/>
            <person name="Rodriguez-Villalon A."/>
            <person name="Hothorn M."/>
            <person name="Hardtke C.S."/>
        </authorList>
    </citation>
    <scope>FUNCTION</scope>
    <source>
        <strain>cv. Columbia</strain>
    </source>
</reference>
<sequence length="99" mass="11365">MTHVLVRRQGQGKKRRWDVNMTMCFFLFFFVFYVSFQIVLSSSASVGYSRLHLVASPPPPPPRKALRYSTAPFRGPLSRDDIYGDDKRVVHTGPNPLHN</sequence>
<dbReference type="EMBL" id="AC008148">
    <property type="status" value="NOT_ANNOTATED_CDS"/>
    <property type="molecule type" value="Genomic_DNA"/>
</dbReference>
<dbReference type="EMBL" id="CP002684">
    <property type="protein sequence ID" value="AEE35135.1"/>
    <property type="molecule type" value="Genomic_DNA"/>
</dbReference>
<dbReference type="EMBL" id="CP002684">
    <property type="protein sequence ID" value="AEE35136.1"/>
    <property type="molecule type" value="Genomic_DNA"/>
</dbReference>
<dbReference type="EMBL" id="BT024647">
    <property type="protein sequence ID" value="ABD57472.1"/>
    <property type="molecule type" value="mRNA"/>
</dbReference>
<dbReference type="EMBL" id="AY088427">
    <property type="protein sequence ID" value="AAM67250.1"/>
    <property type="molecule type" value="mRNA"/>
</dbReference>
<dbReference type="RefSeq" id="NP_001077808.1">
    <property type="nucleotide sequence ID" value="NM_001084339.2"/>
</dbReference>
<dbReference type="RefSeq" id="NP_565004.1">
    <property type="nucleotide sequence ID" value="NM_105757.3"/>
</dbReference>
<dbReference type="STRING" id="3702.Q8L9H6"/>
<dbReference type="GlyCosmos" id="Q8L9H6">
    <property type="glycosylation" value="1 site, No reported glycans"/>
</dbReference>
<dbReference type="PaxDb" id="3702-AT1G70895.1"/>
<dbReference type="EnsemblPlants" id="AT1G70895.1">
    <property type="protein sequence ID" value="AT1G70895.1"/>
    <property type="gene ID" value="AT1G70895"/>
</dbReference>
<dbReference type="EnsemblPlants" id="AT1G70895.2">
    <property type="protein sequence ID" value="AT1G70895.2"/>
    <property type="gene ID" value="AT1G70895"/>
</dbReference>
<dbReference type="GeneID" id="843428"/>
<dbReference type="Gramene" id="AT1G70895.1">
    <property type="protein sequence ID" value="AT1G70895.1"/>
    <property type="gene ID" value="AT1G70895"/>
</dbReference>
<dbReference type="Gramene" id="AT1G70895.2">
    <property type="protein sequence ID" value="AT1G70895.2"/>
    <property type="gene ID" value="AT1G70895"/>
</dbReference>
<dbReference type="KEGG" id="ath:AT1G70895"/>
<dbReference type="Araport" id="AT1G70895"/>
<dbReference type="TAIR" id="AT1G70895">
    <property type="gene designation" value="CLE17"/>
</dbReference>
<dbReference type="HOGENOM" id="CLU_2375791_0_0_1"/>
<dbReference type="InParanoid" id="Q8L9H6"/>
<dbReference type="OMA" id="MTMCFFL"/>
<dbReference type="OrthoDB" id="1080769at2759"/>
<dbReference type="PRO" id="PR:Q8L9H6"/>
<dbReference type="Proteomes" id="UP000006548">
    <property type="component" value="Chromosome 1"/>
</dbReference>
<dbReference type="ExpressionAtlas" id="Q8L9H6">
    <property type="expression patterns" value="baseline and differential"/>
</dbReference>
<dbReference type="GO" id="GO:0048046">
    <property type="term" value="C:apoplast"/>
    <property type="evidence" value="ECO:0000255"/>
    <property type="project" value="TAIR"/>
</dbReference>
<dbReference type="GO" id="GO:0045168">
    <property type="term" value="P:cell-cell signaling involved in cell fate commitment"/>
    <property type="evidence" value="ECO:0000250"/>
    <property type="project" value="UniProtKB"/>
</dbReference>
<dbReference type="GO" id="GO:0010078">
    <property type="term" value="P:maintenance of root meristem identity"/>
    <property type="evidence" value="ECO:0000314"/>
    <property type="project" value="UniProtKB"/>
</dbReference>
<dbReference type="GO" id="GO:0010088">
    <property type="term" value="P:phloem development"/>
    <property type="evidence" value="ECO:0000314"/>
    <property type="project" value="UniProtKB"/>
</dbReference>
<dbReference type="GO" id="GO:0045595">
    <property type="term" value="P:regulation of cell differentiation"/>
    <property type="evidence" value="ECO:0000314"/>
    <property type="project" value="UniProtKB"/>
</dbReference>
<dbReference type="InterPro" id="IPR033249">
    <property type="entry name" value="CLE_plant"/>
</dbReference>
<dbReference type="PANTHER" id="PTHR34545">
    <property type="entry name" value="CLAVATA3/ESR (CLE)-RELATED PROTEIN 22"/>
    <property type="match status" value="1"/>
</dbReference>
<dbReference type="PANTHER" id="PTHR34545:SF9">
    <property type="entry name" value="CLAVATA3_ESR (CLE)-RELATED PROTEIN 17"/>
    <property type="match status" value="1"/>
</dbReference>
<evidence type="ECO:0000250" key="1">
    <source>
        <dbReference type="UniProtKB" id="O49519"/>
    </source>
</evidence>
<evidence type="ECO:0000255" key="2"/>
<evidence type="ECO:0000256" key="3">
    <source>
        <dbReference type="SAM" id="MobiDB-lite"/>
    </source>
</evidence>
<evidence type="ECO:0000269" key="4">
    <source>
    </source>
</evidence>
<evidence type="ECO:0000269" key="5">
    <source>
    </source>
</evidence>
<evidence type="ECO:0000269" key="6">
    <source>
    </source>
</evidence>
<evidence type="ECO:0000303" key="7">
    <source>
    </source>
</evidence>
<evidence type="ECO:0000305" key="8"/>
<evidence type="ECO:0000312" key="9">
    <source>
        <dbReference type="Araport" id="AT1G70895"/>
    </source>
</evidence>
<evidence type="ECO:0000312" key="10">
    <source>
        <dbReference type="EMBL" id="AC008148"/>
    </source>
</evidence>